<gene>
    <name evidence="1" type="primary">kup</name>
    <name type="ordered locus">Nham_1497</name>
</gene>
<comment type="function">
    <text evidence="1">Transport of potassium into the cell. Likely operates as a K(+):H(+) symporter.</text>
</comment>
<comment type="catalytic activity">
    <reaction evidence="1">
        <text>K(+)(in) + H(+)(in) = K(+)(out) + H(+)(out)</text>
        <dbReference type="Rhea" id="RHEA:28490"/>
        <dbReference type="ChEBI" id="CHEBI:15378"/>
        <dbReference type="ChEBI" id="CHEBI:29103"/>
    </reaction>
    <physiologicalReaction direction="right-to-left" evidence="1">
        <dbReference type="Rhea" id="RHEA:28492"/>
    </physiologicalReaction>
</comment>
<comment type="subcellular location">
    <subcellularLocation>
        <location evidence="1">Cell inner membrane</location>
        <topology evidence="1">Multi-pass membrane protein</topology>
    </subcellularLocation>
</comment>
<comment type="similarity">
    <text evidence="1">Belongs to the HAK/KUP transporter (TC 2.A.72) family.</text>
</comment>
<name>KUP_NITHX</name>
<evidence type="ECO:0000255" key="1">
    <source>
        <dbReference type="HAMAP-Rule" id="MF_01522"/>
    </source>
</evidence>
<organism>
    <name type="scientific">Nitrobacter hamburgensis (strain DSM 10229 / NCIMB 13809 / X14)</name>
    <dbReference type="NCBI Taxonomy" id="323097"/>
    <lineage>
        <taxon>Bacteria</taxon>
        <taxon>Pseudomonadati</taxon>
        <taxon>Pseudomonadota</taxon>
        <taxon>Alphaproteobacteria</taxon>
        <taxon>Hyphomicrobiales</taxon>
        <taxon>Nitrobacteraceae</taxon>
        <taxon>Nitrobacter</taxon>
    </lineage>
</organism>
<feature type="chain" id="PRO_0000279802" description="Probable potassium transport system protein Kup">
    <location>
        <begin position="1"/>
        <end position="666"/>
    </location>
</feature>
<feature type="transmembrane region" description="Helical" evidence="1">
    <location>
        <begin position="53"/>
        <end position="73"/>
    </location>
</feature>
<feature type="transmembrane region" description="Helical" evidence="1">
    <location>
        <begin position="89"/>
        <end position="109"/>
    </location>
</feature>
<feature type="transmembrane region" description="Helical" evidence="1">
    <location>
        <begin position="144"/>
        <end position="164"/>
    </location>
</feature>
<feature type="transmembrane region" description="Helical" evidence="1">
    <location>
        <begin position="181"/>
        <end position="201"/>
    </location>
</feature>
<feature type="transmembrane region" description="Helical" evidence="1">
    <location>
        <begin position="212"/>
        <end position="232"/>
    </location>
</feature>
<feature type="transmembrane region" description="Helical" evidence="1">
    <location>
        <begin position="247"/>
        <end position="267"/>
    </location>
</feature>
<feature type="transmembrane region" description="Helical" evidence="1">
    <location>
        <begin position="291"/>
        <end position="311"/>
    </location>
</feature>
<feature type="transmembrane region" description="Helical" evidence="1">
    <location>
        <begin position="324"/>
        <end position="344"/>
    </location>
</feature>
<feature type="transmembrane region" description="Helical" evidence="1">
    <location>
        <begin position="381"/>
        <end position="401"/>
    </location>
</feature>
<feature type="transmembrane region" description="Helical" evidence="1">
    <location>
        <begin position="411"/>
        <end position="431"/>
    </location>
</feature>
<feature type="transmembrane region" description="Helical" evidence="1">
    <location>
        <begin position="441"/>
        <end position="461"/>
    </location>
</feature>
<feature type="transmembrane region" description="Helical" evidence="1">
    <location>
        <begin position="463"/>
        <end position="483"/>
    </location>
</feature>
<sequence>MQAVNIIRWIDGPVLVGDSPGSKPPSERLQDTMAVSDPPVEAAGEASATRSGFWALTLGSIGVVFGDIGTSPLYAFREAVSHAAQQGTVTPVIVLGVLSLILWSLFIVVTAKYVLLLLRADNNGEGGTLSLMALGQRALGRQSLLLLALGVVGASMFIGDSMITPAISVLSAVEGLKLAAPEFGNYVVPLTLLILVMLFAVQSRGTASVASAFAPVMALWFVAIAVLGALHIHEDPSVLLAVNPWYAIHFLLNHGLIGLVIMGLVFLSVTGGEALYADLGHFGRKPIQAAWFCLVLPALLLNYFGQGALILAHPDAIENPFYRLAPAPMILPLVILATAATVIASQAVITGAYSLIRQAVQLGLLPRFEVRYTSETHAGQIYLPRVNILLLIGVLLLVLLFRTSSGLASAYGIAVSTTMVADGIMGFVVVWKLWNWRAATAAALVVPLVVVDIMFFSANLLKLLDGAWVPLLFGLIMVVLIWTWRRGAAILIKKTRRTEVPLLDLIKSLEKRPPHIVKGTAVFLTSDPNFVPTALLHNLKHNKVLHEHNVILTIETAQTPRVDPSERVRMENISEKFSTVSLRFGFMESPNVPKALVIARKLGWQFDIMATSFFVSRRSLKASAQSGMPVWQDRLFIAMSRSANDAINYFQIPTGRVVEVGTQVII</sequence>
<proteinExistence type="inferred from homology"/>
<reference key="1">
    <citation type="submission" date="2006-03" db="EMBL/GenBank/DDBJ databases">
        <title>Complete sequence of chromosome of Nitrobacter hamburgensis X14.</title>
        <authorList>
            <consortium name="US DOE Joint Genome Institute"/>
            <person name="Copeland A."/>
            <person name="Lucas S."/>
            <person name="Lapidus A."/>
            <person name="Barry K."/>
            <person name="Detter J.C."/>
            <person name="Glavina del Rio T."/>
            <person name="Hammon N."/>
            <person name="Israni S."/>
            <person name="Dalin E."/>
            <person name="Tice H."/>
            <person name="Pitluck S."/>
            <person name="Chain P."/>
            <person name="Malfatti S."/>
            <person name="Shin M."/>
            <person name="Vergez L."/>
            <person name="Schmutz J."/>
            <person name="Larimer F."/>
            <person name="Land M."/>
            <person name="Hauser L."/>
            <person name="Kyrpides N."/>
            <person name="Ivanova N."/>
            <person name="Ward B."/>
            <person name="Arp D."/>
            <person name="Klotz M."/>
            <person name="Stein L."/>
            <person name="O'Mullan G."/>
            <person name="Starkenburg S."/>
            <person name="Sayavedra L."/>
            <person name="Poret-Peterson A.T."/>
            <person name="Gentry M.E."/>
            <person name="Bruce D."/>
            <person name="Richardson P."/>
        </authorList>
    </citation>
    <scope>NUCLEOTIDE SEQUENCE [LARGE SCALE GENOMIC DNA]</scope>
    <source>
        <strain>DSM 10229 / NCIMB 13809 / X14</strain>
    </source>
</reference>
<dbReference type="EMBL" id="CP000319">
    <property type="protein sequence ID" value="ABE62319.1"/>
    <property type="molecule type" value="Genomic_DNA"/>
</dbReference>
<dbReference type="SMR" id="Q1QN78"/>
<dbReference type="STRING" id="323097.Nham_1497"/>
<dbReference type="KEGG" id="nha:Nham_1497"/>
<dbReference type="eggNOG" id="COG3158">
    <property type="taxonomic scope" value="Bacteria"/>
</dbReference>
<dbReference type="HOGENOM" id="CLU_008142_4_2_5"/>
<dbReference type="Proteomes" id="UP000001953">
    <property type="component" value="Chromosome"/>
</dbReference>
<dbReference type="GO" id="GO:0005886">
    <property type="term" value="C:plasma membrane"/>
    <property type="evidence" value="ECO:0007669"/>
    <property type="project" value="UniProtKB-SubCell"/>
</dbReference>
<dbReference type="GO" id="GO:0015079">
    <property type="term" value="F:potassium ion transmembrane transporter activity"/>
    <property type="evidence" value="ECO:0007669"/>
    <property type="project" value="UniProtKB-UniRule"/>
</dbReference>
<dbReference type="GO" id="GO:0015293">
    <property type="term" value="F:symporter activity"/>
    <property type="evidence" value="ECO:0007669"/>
    <property type="project" value="UniProtKB-UniRule"/>
</dbReference>
<dbReference type="HAMAP" id="MF_01522">
    <property type="entry name" value="Kup"/>
    <property type="match status" value="1"/>
</dbReference>
<dbReference type="InterPro" id="IPR003855">
    <property type="entry name" value="K+_transporter"/>
</dbReference>
<dbReference type="InterPro" id="IPR053952">
    <property type="entry name" value="K_trans_C"/>
</dbReference>
<dbReference type="InterPro" id="IPR053951">
    <property type="entry name" value="K_trans_N"/>
</dbReference>
<dbReference type="InterPro" id="IPR023051">
    <property type="entry name" value="Kup"/>
</dbReference>
<dbReference type="PANTHER" id="PTHR30540:SF79">
    <property type="entry name" value="LOW AFFINITY POTASSIUM TRANSPORT SYSTEM PROTEIN KUP"/>
    <property type="match status" value="1"/>
</dbReference>
<dbReference type="PANTHER" id="PTHR30540">
    <property type="entry name" value="OSMOTIC STRESS POTASSIUM TRANSPORTER"/>
    <property type="match status" value="1"/>
</dbReference>
<dbReference type="Pfam" id="PF02705">
    <property type="entry name" value="K_trans"/>
    <property type="match status" value="1"/>
</dbReference>
<dbReference type="Pfam" id="PF22776">
    <property type="entry name" value="K_trans_C"/>
    <property type="match status" value="1"/>
</dbReference>
<protein>
    <recommendedName>
        <fullName evidence="1">Probable potassium transport system protein Kup</fullName>
    </recommendedName>
</protein>
<accession>Q1QN78</accession>
<keyword id="KW-0997">Cell inner membrane</keyword>
<keyword id="KW-1003">Cell membrane</keyword>
<keyword id="KW-0406">Ion transport</keyword>
<keyword id="KW-0472">Membrane</keyword>
<keyword id="KW-0630">Potassium</keyword>
<keyword id="KW-0633">Potassium transport</keyword>
<keyword id="KW-1185">Reference proteome</keyword>
<keyword id="KW-0769">Symport</keyword>
<keyword id="KW-0812">Transmembrane</keyword>
<keyword id="KW-1133">Transmembrane helix</keyword>
<keyword id="KW-0813">Transport</keyword>